<feature type="signal peptide" evidence="2">
    <location>
        <begin position="1"/>
        <end position="19"/>
    </location>
</feature>
<feature type="propeptide" id="PRO_0000006845" evidence="1">
    <location>
        <begin position="20"/>
        <end position="58"/>
    </location>
</feature>
<feature type="peptide" id="PRO_0000006846" description="Alpha-defensin 16">
    <location>
        <begin position="59"/>
        <end position="93"/>
    </location>
</feature>
<feature type="region of interest" description="Disordered" evidence="3">
    <location>
        <begin position="22"/>
        <end position="54"/>
    </location>
</feature>
<feature type="disulfide bond" evidence="1">
    <location>
        <begin position="64"/>
        <end position="92"/>
    </location>
</feature>
<feature type="disulfide bond" evidence="1">
    <location>
        <begin position="66"/>
        <end position="81"/>
    </location>
</feature>
<feature type="disulfide bond" evidence="1">
    <location>
        <begin position="71"/>
        <end position="91"/>
    </location>
</feature>
<proteinExistence type="evidence at transcript level"/>
<dbReference type="EMBL" id="U03066">
    <property type="protein sequence ID" value="AAA57183.1"/>
    <property type="molecule type" value="mRNA"/>
</dbReference>
<dbReference type="PIR" id="I48898">
    <property type="entry name" value="I48898"/>
</dbReference>
<dbReference type="SMR" id="P50714"/>
<dbReference type="FunCoup" id="P50714">
    <property type="interactions" value="42"/>
</dbReference>
<dbReference type="AGR" id="MGI:99585"/>
<dbReference type="MGI" id="MGI:99585">
    <property type="gene designation" value="Defa16"/>
</dbReference>
<dbReference type="InParanoid" id="P50714"/>
<dbReference type="PRO" id="PR:P50714"/>
<dbReference type="Proteomes" id="UP000000589">
    <property type="component" value="Unplaced"/>
</dbReference>
<dbReference type="RNAct" id="P50714">
    <property type="molecule type" value="protein"/>
</dbReference>
<dbReference type="GO" id="GO:0005615">
    <property type="term" value="C:extracellular space"/>
    <property type="evidence" value="ECO:0007669"/>
    <property type="project" value="InterPro"/>
</dbReference>
<dbReference type="GO" id="GO:0042742">
    <property type="term" value="P:defense response to bacterium"/>
    <property type="evidence" value="ECO:0007669"/>
    <property type="project" value="UniProtKB-KW"/>
</dbReference>
<dbReference type="InterPro" id="IPR016327">
    <property type="entry name" value="Alpha-defensin"/>
</dbReference>
<dbReference type="InterPro" id="IPR006081">
    <property type="entry name" value="Alpha-defensin_C"/>
</dbReference>
<dbReference type="InterPro" id="IPR002366">
    <property type="entry name" value="Alpha-defensin_N"/>
</dbReference>
<dbReference type="InterPro" id="IPR006080">
    <property type="entry name" value="Beta/alpha-defensin_C"/>
</dbReference>
<dbReference type="PANTHER" id="PTHR11876">
    <property type="entry name" value="ALPHA-DEFENSIN 1"/>
    <property type="match status" value="1"/>
</dbReference>
<dbReference type="PANTHER" id="PTHR11876:SF2">
    <property type="entry name" value="ALPHA-DEFENSIN 1-RELATED"/>
    <property type="match status" value="1"/>
</dbReference>
<dbReference type="Pfam" id="PF00323">
    <property type="entry name" value="Defensin_1"/>
    <property type="match status" value="1"/>
</dbReference>
<dbReference type="Pfam" id="PF00879">
    <property type="entry name" value="Defensin_propep"/>
    <property type="match status" value="1"/>
</dbReference>
<dbReference type="PIRSF" id="PIRSF001875">
    <property type="entry name" value="Alpha-defensin"/>
    <property type="match status" value="1"/>
</dbReference>
<dbReference type="SMART" id="SM01418">
    <property type="entry name" value="Defensin_propep"/>
    <property type="match status" value="1"/>
</dbReference>
<dbReference type="SMART" id="SM00048">
    <property type="entry name" value="DEFSN"/>
    <property type="match status" value="1"/>
</dbReference>
<dbReference type="SUPFAM" id="SSF57392">
    <property type="entry name" value="Defensin-like"/>
    <property type="match status" value="1"/>
</dbReference>
<dbReference type="PROSITE" id="PS00269">
    <property type="entry name" value="DEFENSIN"/>
    <property type="match status" value="1"/>
</dbReference>
<name>DFA16_MOUSE</name>
<reference key="1">
    <citation type="journal article" date="1994" name="Infect. Immun.">
        <title>Mouse Paneth cell defensins: primary structures and antibacterial activities of numerous cryptdin isoforms.</title>
        <authorList>
            <person name="Ouellette A.J."/>
            <person name="Hsieh M.M."/>
            <person name="Nosek M.T."/>
            <person name="Cano-Gauci D.F."/>
            <person name="Huttner K.M."/>
            <person name="Buick R.N."/>
            <person name="Selsted M.E."/>
        </authorList>
    </citation>
    <scope>NUCLEOTIDE SEQUENCE [MRNA]</scope>
    <source>
        <strain>CD-1</strain>
        <tissue>Intestinal crypt</tissue>
    </source>
</reference>
<reference key="2">
    <citation type="journal article" date="1994" name="Genomics">
        <title>Structure and diversity of the murine cryptdin gene family.</title>
        <authorList>
            <person name="Huttner K.M."/>
            <person name="Selsted M.E."/>
            <person name="Ouellette A.J."/>
        </authorList>
    </citation>
    <scope>NUCLEOTIDE SEQUENCE [MRNA] OF 59-93</scope>
    <source>
        <strain>129/SvJ</strain>
        <strain>C3H/HeJ</strain>
        <tissue>Small intestine</tissue>
    </source>
</reference>
<protein>
    <recommendedName>
        <fullName>Alpha-defensin 16</fullName>
    </recommendedName>
    <alternativeName>
        <fullName>Defensin-related cryptdin-16</fullName>
    </alternativeName>
</protein>
<sequence length="93" mass="10430">MKTLILLSALVLLAFQVQADPIQNTDEETKTEEQPGEEDQAVSVSFGDPEGTSLQEESLRDLVCYCRSRGCKGRERMNGTCRKGHLMYTLCCR</sequence>
<accession>P50714</accession>
<evidence type="ECO:0000250" key="1"/>
<evidence type="ECO:0000255" key="2"/>
<evidence type="ECO:0000256" key="3">
    <source>
        <dbReference type="SAM" id="MobiDB-lite"/>
    </source>
</evidence>
<evidence type="ECO:0000305" key="4"/>
<gene>
    <name type="primary">Defa16</name>
    <name type="synonym">Defcr16</name>
</gene>
<keyword id="KW-0044">Antibiotic</keyword>
<keyword id="KW-0929">Antimicrobial</keyword>
<keyword id="KW-0211">Defensin</keyword>
<keyword id="KW-1015">Disulfide bond</keyword>
<keyword id="KW-1185">Reference proteome</keyword>
<keyword id="KW-0964">Secreted</keyword>
<keyword id="KW-0732">Signal</keyword>
<comment type="function">
    <text>Probably contributes to the antimicrobial barrier function of the small bowel mucosa.</text>
</comment>
<comment type="subcellular location">
    <subcellularLocation>
        <location>Secreted</location>
    </subcellularLocation>
</comment>
<comment type="tissue specificity">
    <text>Paneth cells of the small bowel.</text>
</comment>
<comment type="similarity">
    <text evidence="4">Belongs to the alpha-defensin family.</text>
</comment>
<organism>
    <name type="scientific">Mus musculus</name>
    <name type="common">Mouse</name>
    <dbReference type="NCBI Taxonomy" id="10090"/>
    <lineage>
        <taxon>Eukaryota</taxon>
        <taxon>Metazoa</taxon>
        <taxon>Chordata</taxon>
        <taxon>Craniata</taxon>
        <taxon>Vertebrata</taxon>
        <taxon>Euteleostomi</taxon>
        <taxon>Mammalia</taxon>
        <taxon>Eutheria</taxon>
        <taxon>Euarchontoglires</taxon>
        <taxon>Glires</taxon>
        <taxon>Rodentia</taxon>
        <taxon>Myomorpha</taxon>
        <taxon>Muroidea</taxon>
        <taxon>Muridae</taxon>
        <taxon>Murinae</taxon>
        <taxon>Mus</taxon>
        <taxon>Mus</taxon>
    </lineage>
</organism>